<protein>
    <recommendedName>
        <fullName evidence="1">UPF0325 protein Ping_0715</fullName>
    </recommendedName>
</protein>
<evidence type="ECO:0000255" key="1">
    <source>
        <dbReference type="HAMAP-Rule" id="MF_01519"/>
    </source>
</evidence>
<organism>
    <name type="scientific">Psychromonas ingrahamii (strain DSM 17664 / CCUG 51855 / 37)</name>
    <dbReference type="NCBI Taxonomy" id="357804"/>
    <lineage>
        <taxon>Bacteria</taxon>
        <taxon>Pseudomonadati</taxon>
        <taxon>Pseudomonadota</taxon>
        <taxon>Gammaproteobacteria</taxon>
        <taxon>Alteromonadales</taxon>
        <taxon>Psychromonadaceae</taxon>
        <taxon>Psychromonas</taxon>
    </lineage>
</organism>
<accession>A1SSV2</accession>
<proteinExistence type="inferred from homology"/>
<reference key="1">
    <citation type="journal article" date="2008" name="BMC Genomics">
        <title>Genomics of an extreme psychrophile, Psychromonas ingrahamii.</title>
        <authorList>
            <person name="Riley M."/>
            <person name="Staley J.T."/>
            <person name="Danchin A."/>
            <person name="Wang T.Z."/>
            <person name="Brettin T.S."/>
            <person name="Hauser L.J."/>
            <person name="Land M.L."/>
            <person name="Thompson L.S."/>
        </authorList>
    </citation>
    <scope>NUCLEOTIDE SEQUENCE [LARGE SCALE GENOMIC DNA]</scope>
    <source>
        <strain>DSM 17664 / CCUG 51855 / 37</strain>
    </source>
</reference>
<gene>
    <name type="ordered locus">Ping_0715</name>
</gene>
<keyword id="KW-1185">Reference proteome</keyword>
<sequence>MYSNLKSIGVVNYDNIDKYTLRQEGDTDILKIYFRKASRQFLAKSLKFKFPRQRKKISQDHGSSGFRNVSEIGSTLRYVLKELDSLTEHVKEEKELKVQVLEDLKHLESVVASKIKEIERKLEQM</sequence>
<feature type="chain" id="PRO_0000289321" description="UPF0325 protein Ping_0715">
    <location>
        <begin position="1"/>
        <end position="125"/>
    </location>
</feature>
<dbReference type="EMBL" id="CP000510">
    <property type="protein sequence ID" value="ABM02567.1"/>
    <property type="molecule type" value="Genomic_DNA"/>
</dbReference>
<dbReference type="RefSeq" id="WP_011769126.1">
    <property type="nucleotide sequence ID" value="NC_008709.1"/>
</dbReference>
<dbReference type="SMR" id="A1SSV2"/>
<dbReference type="STRING" id="357804.Ping_0715"/>
<dbReference type="KEGG" id="pin:Ping_0715"/>
<dbReference type="eggNOG" id="ENOG502ZBV4">
    <property type="taxonomic scope" value="Bacteria"/>
</dbReference>
<dbReference type="HOGENOM" id="CLU_136774_0_0_6"/>
<dbReference type="OrthoDB" id="5624524at2"/>
<dbReference type="Proteomes" id="UP000000639">
    <property type="component" value="Chromosome"/>
</dbReference>
<dbReference type="HAMAP" id="MF_01519">
    <property type="entry name" value="UPF0325"/>
    <property type="match status" value="1"/>
</dbReference>
<dbReference type="InterPro" id="IPR020911">
    <property type="entry name" value="UPF0325"/>
</dbReference>
<dbReference type="NCBIfam" id="NF010213">
    <property type="entry name" value="PRK13677.1"/>
    <property type="match status" value="1"/>
</dbReference>
<dbReference type="Pfam" id="PF11944">
    <property type="entry name" value="DUF3461"/>
    <property type="match status" value="1"/>
</dbReference>
<name>Y715_PSYIN</name>
<comment type="similarity">
    <text evidence="1">Belongs to the UPF0325 family.</text>
</comment>